<keyword id="KW-0325">Glycoprotein</keyword>
<keyword id="KW-1035">Host cytoplasm</keyword>
<keyword id="KW-0460">Magnesium</keyword>
<keyword id="KW-0479">Metal-binding</keyword>
<keyword id="KW-0547">Nucleotide-binding</keyword>
<keyword id="KW-0597">Phosphoprotein</keyword>
<keyword id="KW-0694">RNA-binding</keyword>
<feature type="chain" id="PRO_0000369496" description="Non-structural protein 5">
    <location>
        <begin position="1"/>
        <end position="198"/>
    </location>
</feature>
<feature type="region of interest" description="Disordered" evidence="2">
    <location>
        <begin position="16"/>
        <end position="37"/>
    </location>
</feature>
<feature type="region of interest" description="Disordered" evidence="2">
    <location>
        <begin position="53"/>
        <end position="72"/>
    </location>
</feature>
<feature type="region of interest" description="Disordered" evidence="2">
    <location>
        <begin position="85"/>
        <end position="104"/>
    </location>
</feature>
<feature type="region of interest" description="Disordered" evidence="2">
    <location>
        <begin position="126"/>
        <end position="167"/>
    </location>
</feature>
<feature type="compositionally biased region" description="Low complexity" evidence="2">
    <location>
        <begin position="16"/>
        <end position="30"/>
    </location>
</feature>
<feature type="compositionally biased region" description="Polar residues" evidence="2">
    <location>
        <begin position="91"/>
        <end position="104"/>
    </location>
</feature>
<feature type="compositionally biased region" description="Acidic residues" evidence="2">
    <location>
        <begin position="153"/>
        <end position="166"/>
    </location>
</feature>
<feature type="binding site" evidence="1">
    <location>
        <position position="92"/>
    </location>
    <ligand>
        <name>Mg(2+)</name>
        <dbReference type="ChEBI" id="CHEBI:18420"/>
    </ligand>
</feature>
<feature type="modified residue" description="Phosphoserine; by host CK1" evidence="1">
    <location>
        <position position="67"/>
    </location>
</feature>
<feature type="modified residue" description="Phosphoserine; by host" evidence="1">
    <location>
        <position position="154"/>
    </location>
</feature>
<feature type="modified residue" description="Phosphoserine; by host" evidence="1">
    <location>
        <position position="156"/>
    </location>
</feature>
<feature type="modified residue" description="Phosphoserine; by host" evidence="1">
    <location>
        <position position="164"/>
    </location>
</feature>
<feature type="modified residue" description="Phosphoserine; by host" evidence="1">
    <location>
        <position position="166"/>
    </location>
</feature>
<dbReference type="EMBL" id="EF672569">
    <property type="protein sequence ID" value="ABV53242.1"/>
    <property type="molecule type" value="Genomic_RNA"/>
</dbReference>
<dbReference type="Proteomes" id="UP000001456">
    <property type="component" value="Genome"/>
</dbReference>
<dbReference type="GO" id="GO:0030430">
    <property type="term" value="C:host cell cytoplasm"/>
    <property type="evidence" value="ECO:0007669"/>
    <property type="project" value="UniProtKB-SubCell"/>
</dbReference>
<dbReference type="GO" id="GO:0016887">
    <property type="term" value="F:ATP hydrolysis activity"/>
    <property type="evidence" value="ECO:0007669"/>
    <property type="project" value="UniProtKB-UniRule"/>
</dbReference>
<dbReference type="GO" id="GO:0000287">
    <property type="term" value="F:magnesium ion binding"/>
    <property type="evidence" value="ECO:0007669"/>
    <property type="project" value="UniProtKB-UniRule"/>
</dbReference>
<dbReference type="GO" id="GO:0000166">
    <property type="term" value="F:nucleotide binding"/>
    <property type="evidence" value="ECO:0007669"/>
    <property type="project" value="UniProtKB-UniRule"/>
</dbReference>
<dbReference type="GO" id="GO:0003723">
    <property type="term" value="F:RNA binding"/>
    <property type="evidence" value="ECO:0007669"/>
    <property type="project" value="UniProtKB-UniRule"/>
</dbReference>
<dbReference type="GO" id="GO:0019079">
    <property type="term" value="P:viral genome replication"/>
    <property type="evidence" value="ECO:0007669"/>
    <property type="project" value="UniProtKB-UniRule"/>
</dbReference>
<dbReference type="HAMAP" id="MF_04092">
    <property type="entry name" value="ROTA_NSP5"/>
    <property type="match status" value="1"/>
</dbReference>
<dbReference type="InterPro" id="IPR002512">
    <property type="entry name" value="Rotavirus_A/C_NSP5"/>
</dbReference>
<dbReference type="Pfam" id="PF01525">
    <property type="entry name" value="Rota_NS26"/>
    <property type="match status" value="2"/>
</dbReference>
<dbReference type="PIRSF" id="PIRSF004006">
    <property type="entry name" value="Rota_NS26"/>
    <property type="match status" value="1"/>
</dbReference>
<evidence type="ECO:0000255" key="1">
    <source>
        <dbReference type="HAMAP-Rule" id="MF_04092"/>
    </source>
</evidence>
<evidence type="ECO:0000256" key="2">
    <source>
        <dbReference type="SAM" id="MobiDB-lite"/>
    </source>
</evidence>
<organismHost>
    <name type="scientific">Homo sapiens</name>
    <name type="common">Human</name>
    <dbReference type="NCBI Taxonomy" id="9606"/>
</organismHost>
<organism>
    <name type="scientific">Rotavirus A (isolate RVA/Human/United Kingdom/A64/1987/G10P11[14])</name>
    <name type="common">RV-A</name>
    <dbReference type="NCBI Taxonomy" id="578827"/>
    <lineage>
        <taxon>Viruses</taxon>
        <taxon>Riboviria</taxon>
        <taxon>Orthornavirae</taxon>
        <taxon>Duplornaviricota</taxon>
        <taxon>Resentoviricetes</taxon>
        <taxon>Reovirales</taxon>
        <taxon>Sedoreoviridae</taxon>
        <taxon>Rotavirus</taxon>
        <taxon>Rotavirus A</taxon>
    </lineage>
</organism>
<protein>
    <recommendedName>
        <fullName evidence="1">Non-structural protein 5</fullName>
        <shortName evidence="1">NSP5</shortName>
    </recommendedName>
    <alternativeName>
        <fullName evidence="1">NS26</fullName>
    </alternativeName>
</protein>
<reference key="1">
    <citation type="journal article" date="2008" name="J. Virol.">
        <title>Group A human rotavirus genomics: evidence that gene constellations are influenced by viral protein interactions.</title>
        <authorList>
            <person name="Heiman E.M."/>
            <person name="McDonald S.M."/>
            <person name="Barro M."/>
            <person name="Taraporewala Z.F."/>
            <person name="Bar-Magen T."/>
            <person name="Patton J.T."/>
        </authorList>
    </citation>
    <scope>NUCLEOTIDE SEQUENCE [GENOMIC RNA]</scope>
</reference>
<name>NSP5_ROTH7</name>
<accession>B3SRR7</accession>
<sequence length="198" mass="21766">MSLSIDVTSLPSISSSIYKNESSSTTSTLSGKSIGRSEQYISPDAEAFNKYMLSKSPEDIGPSDSASNDPLTSFSIRSNAVKTNADAGVSMDSSTQSRPSSNVGCDQVDFSFNKGIKMNANLDSSISISTNSKKEKSKNEHKSRKHYPKIEAESDSDDYVLDDSDSDDGKCKNCKYKRKYFALRMRMKQVAMQLIEDL</sequence>
<proteinExistence type="inferred from homology"/>
<comment type="function">
    <text evidence="1">Plays an essential role in the viral genome replication. Participates, together with NSP2, in the formation of viral factories (viroplasms), which are large inclusions in the host cytoplasm where replication intermediates are assembled and viral RNA replication takes place. Orchestrates the recruitment of viroplasmic proteins such as capsid proteins to these factories. Participates in the selective exclusion of host proteins from stress granules (SG) and P bodies (PB). Also participates in the sequestration of these remodeled organelles in viral factories.</text>
</comment>
<comment type="cofactor">
    <cofactor evidence="1">
        <name>Mg(2+)</name>
        <dbReference type="ChEBI" id="CHEBI:18420"/>
    </cofactor>
</comment>
<comment type="subunit">
    <text evidence="1">Homodimer. Interacts with VP1. Interacts with VP2. Interacts with NSP2; this interaction leads to up-regulation of NSP5 hyperphosphorylation and formation of virus factories. Interacts with NSP6. Participates in the selective exclusion of host proteins from stress granules (SG) and P bodies (PB). Also participates in the sequestration of these remodeled organelles in viral factories.</text>
</comment>
<comment type="subcellular location">
    <subcellularLocation>
        <location evidence="1">Host cytoplasm</location>
    </subcellularLocation>
    <text evidence="1">Found in spherical cytoplasmic structures, called virus factories, that appear early after infection and are the site of viral replication and packaging.</text>
</comment>
<comment type="PTM">
    <text evidence="1">O-glycosylated.</text>
</comment>
<comment type="PTM">
    <text evidence="1">Hyperphosphorylated on serine residues, when in dimeric form. Phosphorylation by host CK1 is required for the hyperphosphorylation of NSP5 dimer.</text>
</comment>
<comment type="similarity">
    <text evidence="1">Belongs to the rotavirus NSP5 family.</text>
</comment>